<feature type="chain" id="PRO_0000145153" description="DNA topoisomerase 1">
    <location>
        <begin position="1"/>
        <end position="710"/>
    </location>
</feature>
<feature type="domain" description="Toprim" evidence="1">
    <location>
        <begin position="26"/>
        <end position="136"/>
    </location>
</feature>
<feature type="domain" description="Topo IA-type catalytic" evidence="2">
    <location>
        <begin position="152"/>
        <end position="574"/>
    </location>
</feature>
<feature type="zinc finger region" description="C4-type 1">
    <location>
        <begin position="595"/>
        <end position="621"/>
    </location>
</feature>
<feature type="zinc finger region" description="C4-type 2">
    <location>
        <begin position="635"/>
        <end position="663"/>
    </location>
</feature>
<feature type="zinc finger region" description="C4-type 3; atypical">
    <location>
        <begin position="676"/>
        <end position="702"/>
    </location>
</feature>
<feature type="region of interest" description="Disordered" evidence="3">
    <location>
        <begin position="1"/>
        <end position="22"/>
    </location>
</feature>
<feature type="region of interest" description="Interaction with DNA" evidence="1">
    <location>
        <begin position="186"/>
        <end position="191"/>
    </location>
</feature>
<feature type="compositionally biased region" description="Basic residues" evidence="3">
    <location>
        <begin position="7"/>
        <end position="22"/>
    </location>
</feature>
<feature type="active site" description="O-(5'-phospho-DNA)-tyrosine intermediate" evidence="2">
    <location>
        <position position="321"/>
    </location>
</feature>
<feature type="binding site" evidence="1">
    <location>
        <position position="32"/>
    </location>
    <ligand>
        <name>Mg(2+)</name>
        <dbReference type="ChEBI" id="CHEBI:18420"/>
        <note>catalytic</note>
    </ligand>
</feature>
<feature type="binding site" evidence="1">
    <location>
        <position position="105"/>
    </location>
    <ligand>
        <name>Mg(2+)</name>
        <dbReference type="ChEBI" id="CHEBI:18420"/>
        <note>catalytic</note>
    </ligand>
</feature>
<feature type="site" description="Interaction with DNA" evidence="1">
    <location>
        <position position="56"/>
    </location>
</feature>
<feature type="site" description="Interaction with DNA" evidence="1">
    <location>
        <position position="162"/>
    </location>
</feature>
<feature type="site" description="Interaction with DNA" evidence="1">
    <location>
        <position position="163"/>
    </location>
</feature>
<feature type="site" description="Interaction with DNA" evidence="1">
    <location>
        <position position="166"/>
    </location>
</feature>
<feature type="site" description="Interaction with DNA" evidence="1">
    <location>
        <position position="171"/>
    </location>
</feature>
<feature type="site" description="Interaction with DNA" evidence="1">
    <location>
        <position position="178"/>
    </location>
</feature>
<feature type="site" description="Interaction with DNA" evidence="1">
    <location>
        <position position="323"/>
    </location>
</feature>
<feature type="site" description="Interaction with DNA" evidence="1">
    <location>
        <position position="506"/>
    </location>
</feature>
<dbReference type="EC" id="5.6.2.1" evidence="1"/>
<dbReference type="EMBL" id="AE005176">
    <property type="protein sequence ID" value="AAK05328.1"/>
    <property type="molecule type" value="Genomic_DNA"/>
</dbReference>
<dbReference type="PIR" id="F86778">
    <property type="entry name" value="F86778"/>
</dbReference>
<dbReference type="RefSeq" id="NP_267386.1">
    <property type="nucleotide sequence ID" value="NC_002662.1"/>
</dbReference>
<dbReference type="RefSeq" id="WP_003131148.1">
    <property type="nucleotide sequence ID" value="NC_002662.1"/>
</dbReference>
<dbReference type="SMR" id="Q9CG80"/>
<dbReference type="PaxDb" id="272623-L0298"/>
<dbReference type="EnsemblBacteria" id="AAK05328">
    <property type="protein sequence ID" value="AAK05328"/>
    <property type="gene ID" value="L0298"/>
</dbReference>
<dbReference type="KEGG" id="lla:L0298"/>
<dbReference type="PATRIC" id="fig|272623.7.peg.1332"/>
<dbReference type="eggNOG" id="COG0550">
    <property type="taxonomic scope" value="Bacteria"/>
</dbReference>
<dbReference type="HOGENOM" id="CLU_002929_4_3_9"/>
<dbReference type="OrthoDB" id="9804262at2"/>
<dbReference type="Proteomes" id="UP000002196">
    <property type="component" value="Chromosome"/>
</dbReference>
<dbReference type="GO" id="GO:0005694">
    <property type="term" value="C:chromosome"/>
    <property type="evidence" value="ECO:0007669"/>
    <property type="project" value="InterPro"/>
</dbReference>
<dbReference type="GO" id="GO:0003677">
    <property type="term" value="F:DNA binding"/>
    <property type="evidence" value="ECO:0007669"/>
    <property type="project" value="UniProtKB-KW"/>
</dbReference>
<dbReference type="GO" id="GO:0003917">
    <property type="term" value="F:DNA topoisomerase type I (single strand cut, ATP-independent) activity"/>
    <property type="evidence" value="ECO:0007669"/>
    <property type="project" value="UniProtKB-UniRule"/>
</dbReference>
<dbReference type="GO" id="GO:0008270">
    <property type="term" value="F:zinc ion binding"/>
    <property type="evidence" value="ECO:0007669"/>
    <property type="project" value="UniProtKB-KW"/>
</dbReference>
<dbReference type="GO" id="GO:0006265">
    <property type="term" value="P:DNA topological change"/>
    <property type="evidence" value="ECO:0007669"/>
    <property type="project" value="UniProtKB-UniRule"/>
</dbReference>
<dbReference type="CDD" id="cd00186">
    <property type="entry name" value="TOP1Ac"/>
    <property type="match status" value="1"/>
</dbReference>
<dbReference type="CDD" id="cd03363">
    <property type="entry name" value="TOPRIM_TopoIA_TopoI"/>
    <property type="match status" value="1"/>
</dbReference>
<dbReference type="Gene3D" id="3.40.50.140">
    <property type="match status" value="1"/>
</dbReference>
<dbReference type="Gene3D" id="3.30.65.10">
    <property type="entry name" value="Bacterial Topoisomerase I, domain 1"/>
    <property type="match status" value="2"/>
</dbReference>
<dbReference type="Gene3D" id="1.10.460.10">
    <property type="entry name" value="Topoisomerase I, domain 2"/>
    <property type="match status" value="1"/>
</dbReference>
<dbReference type="Gene3D" id="2.70.20.10">
    <property type="entry name" value="Topoisomerase I, domain 3"/>
    <property type="match status" value="1"/>
</dbReference>
<dbReference type="Gene3D" id="1.10.290.10">
    <property type="entry name" value="Topoisomerase I, domain 4"/>
    <property type="match status" value="1"/>
</dbReference>
<dbReference type="HAMAP" id="MF_00952">
    <property type="entry name" value="Topoisom_1_prok"/>
    <property type="match status" value="1"/>
</dbReference>
<dbReference type="InterPro" id="IPR000380">
    <property type="entry name" value="Topo_IA"/>
</dbReference>
<dbReference type="InterPro" id="IPR003601">
    <property type="entry name" value="Topo_IA_2"/>
</dbReference>
<dbReference type="InterPro" id="IPR023406">
    <property type="entry name" value="Topo_IA_AS"/>
</dbReference>
<dbReference type="InterPro" id="IPR013497">
    <property type="entry name" value="Topo_IA_cen"/>
</dbReference>
<dbReference type="InterPro" id="IPR013824">
    <property type="entry name" value="Topo_IA_cen_sub1"/>
</dbReference>
<dbReference type="InterPro" id="IPR013825">
    <property type="entry name" value="Topo_IA_cen_sub2"/>
</dbReference>
<dbReference type="InterPro" id="IPR013826">
    <property type="entry name" value="Topo_IA_cen_sub3"/>
</dbReference>
<dbReference type="InterPro" id="IPR023405">
    <property type="entry name" value="Topo_IA_core_domain"/>
</dbReference>
<dbReference type="InterPro" id="IPR003602">
    <property type="entry name" value="Topo_IA_DNA-bd_dom"/>
</dbReference>
<dbReference type="InterPro" id="IPR013498">
    <property type="entry name" value="Topo_IA_Znf"/>
</dbReference>
<dbReference type="InterPro" id="IPR005733">
    <property type="entry name" value="TopoI_bac-type"/>
</dbReference>
<dbReference type="InterPro" id="IPR028612">
    <property type="entry name" value="Topoisom_1_IA"/>
</dbReference>
<dbReference type="InterPro" id="IPR006171">
    <property type="entry name" value="TOPRIM_dom"/>
</dbReference>
<dbReference type="InterPro" id="IPR034149">
    <property type="entry name" value="TOPRIM_TopoI"/>
</dbReference>
<dbReference type="NCBIfam" id="TIGR01051">
    <property type="entry name" value="topA_bact"/>
    <property type="match status" value="1"/>
</dbReference>
<dbReference type="PANTHER" id="PTHR42785:SF1">
    <property type="entry name" value="DNA TOPOISOMERASE"/>
    <property type="match status" value="1"/>
</dbReference>
<dbReference type="PANTHER" id="PTHR42785">
    <property type="entry name" value="DNA TOPOISOMERASE, TYPE IA, CORE"/>
    <property type="match status" value="1"/>
</dbReference>
<dbReference type="Pfam" id="PF01131">
    <property type="entry name" value="Topoisom_bac"/>
    <property type="match status" value="1"/>
</dbReference>
<dbReference type="Pfam" id="PF01751">
    <property type="entry name" value="Toprim"/>
    <property type="match status" value="1"/>
</dbReference>
<dbReference type="Pfam" id="PF01396">
    <property type="entry name" value="Zn_ribbon_Top1"/>
    <property type="match status" value="3"/>
</dbReference>
<dbReference type="PRINTS" id="PR00417">
    <property type="entry name" value="PRTPISMRASEI"/>
</dbReference>
<dbReference type="SMART" id="SM00437">
    <property type="entry name" value="TOP1Ac"/>
    <property type="match status" value="1"/>
</dbReference>
<dbReference type="SMART" id="SM00436">
    <property type="entry name" value="TOP1Bc"/>
    <property type="match status" value="1"/>
</dbReference>
<dbReference type="SMART" id="SM00493">
    <property type="entry name" value="TOPRIM"/>
    <property type="match status" value="1"/>
</dbReference>
<dbReference type="SUPFAM" id="SSF56712">
    <property type="entry name" value="Prokaryotic type I DNA topoisomerase"/>
    <property type="match status" value="1"/>
</dbReference>
<dbReference type="SUPFAM" id="SSF57783">
    <property type="entry name" value="Zinc beta-ribbon"/>
    <property type="match status" value="1"/>
</dbReference>
<dbReference type="PROSITE" id="PS00396">
    <property type="entry name" value="TOPO_IA_1"/>
    <property type="match status" value="1"/>
</dbReference>
<dbReference type="PROSITE" id="PS52039">
    <property type="entry name" value="TOPO_IA_2"/>
    <property type="match status" value="1"/>
</dbReference>
<dbReference type="PROSITE" id="PS50880">
    <property type="entry name" value="TOPRIM"/>
    <property type="match status" value="1"/>
</dbReference>
<organism>
    <name type="scientific">Lactococcus lactis subsp. lactis (strain IL1403)</name>
    <name type="common">Streptococcus lactis</name>
    <dbReference type="NCBI Taxonomy" id="272623"/>
    <lineage>
        <taxon>Bacteria</taxon>
        <taxon>Bacillati</taxon>
        <taxon>Bacillota</taxon>
        <taxon>Bacilli</taxon>
        <taxon>Lactobacillales</taxon>
        <taxon>Streptococcaceae</taxon>
        <taxon>Lactococcus</taxon>
    </lineage>
</organism>
<keyword id="KW-0238">DNA-binding</keyword>
<keyword id="KW-0413">Isomerase</keyword>
<keyword id="KW-0460">Magnesium</keyword>
<keyword id="KW-0479">Metal-binding</keyword>
<keyword id="KW-1185">Reference proteome</keyword>
<keyword id="KW-0677">Repeat</keyword>
<keyword id="KW-0799">Topoisomerase</keyword>
<keyword id="KW-0862">Zinc</keyword>
<keyword id="KW-0863">Zinc-finger</keyword>
<gene>
    <name evidence="1" type="primary">topA</name>
    <name type="ordered locus">LL1230</name>
    <name type="ORF">L0298</name>
</gene>
<reference key="1">
    <citation type="journal article" date="2001" name="Genome Res.">
        <title>The complete genome sequence of the lactic acid bacterium Lactococcus lactis ssp. lactis IL1403.</title>
        <authorList>
            <person name="Bolotin A."/>
            <person name="Wincker P."/>
            <person name="Mauger S."/>
            <person name="Jaillon O."/>
            <person name="Malarme K."/>
            <person name="Weissenbach J."/>
            <person name="Ehrlich S.D."/>
            <person name="Sorokin A."/>
        </authorList>
    </citation>
    <scope>NUCLEOTIDE SEQUENCE [LARGE SCALE GENOMIC DNA]</scope>
    <source>
        <strain>IL1403</strain>
    </source>
</reference>
<accession>Q9CG80</accession>
<name>TOP1_LACLA</name>
<protein>
    <recommendedName>
        <fullName evidence="1">DNA topoisomerase 1</fullName>
        <ecNumber evidence="1">5.6.2.1</ecNumber>
    </recommendedName>
    <alternativeName>
        <fullName evidence="1">DNA topoisomerase I</fullName>
    </alternativeName>
    <alternativeName>
        <fullName>Omega-protein</fullName>
    </alternativeName>
    <alternativeName>
        <fullName>Relaxing enzyme</fullName>
    </alternativeName>
    <alternativeName>
        <fullName>Swivelase</fullName>
    </alternativeName>
    <alternativeName>
        <fullName>Untwisting enzyme</fullName>
    </alternativeName>
</protein>
<comment type="function">
    <text evidence="1">Releases the supercoiling and torsional tension of DNA, which is introduced during the DNA replication and transcription, by transiently cleaving and rejoining one strand of the DNA duplex. Introduces a single-strand break via transesterification at a target site in duplex DNA. The scissile phosphodiester is attacked by the catalytic tyrosine of the enzyme, resulting in the formation of a DNA-(5'-phosphotyrosyl)-enzyme intermediate and the expulsion of a 3'-OH DNA strand. The free DNA strand then undergoes passage around the unbroken strand, thus removing DNA supercoils. Finally, in the religation step, the DNA 3'-OH attacks the covalent intermediate to expel the active-site tyrosine and restore the DNA phosphodiester backbone.</text>
</comment>
<comment type="catalytic activity">
    <reaction evidence="1">
        <text>ATP-independent breakage of single-stranded DNA, followed by passage and rejoining.</text>
        <dbReference type="EC" id="5.6.2.1"/>
    </reaction>
</comment>
<comment type="cofactor">
    <cofactor evidence="1">
        <name>Mg(2+)</name>
        <dbReference type="ChEBI" id="CHEBI:18420"/>
    </cofactor>
</comment>
<comment type="subunit">
    <text evidence="1">Monomer.</text>
</comment>
<comment type="similarity">
    <text evidence="1">Belongs to the type IA topoisomerase family.</text>
</comment>
<proteinExistence type="inferred from homology"/>
<evidence type="ECO:0000255" key="1">
    <source>
        <dbReference type="HAMAP-Rule" id="MF_00952"/>
    </source>
</evidence>
<evidence type="ECO:0000255" key="2">
    <source>
        <dbReference type="PROSITE-ProRule" id="PRU01383"/>
    </source>
</evidence>
<evidence type="ECO:0000256" key="3">
    <source>
        <dbReference type="SAM" id="MobiDB-lite"/>
    </source>
</evidence>
<sequence length="710" mass="80741">MPTSTKSKTKTTTKKKTTRKRVTPGKNLVIVESPAKAKTIEKYLGRNYKVVASVGHIRDLKKSTMSVDIENDYEPQYINIRGKAPLINSLKKEAKAAKAVYLASDPDREGEAISWHLAHILNLPLEEKNRVVFNEITKDAVKNAFKEPRQIDVDLVDAQQARRVLDRLVGYSISPILWKKVKKGLSAGRVQSIALKLIVDRENEINAFIPEEYWSIDGEFKKGTKKFKASFWGIDGKKHPLKTNEDVIKVMERLDGPDFNVDKVEKKERRRNAPLPYTTSSMQQDAANKLNFRTRKTMMVAQQLYEGLTLGSQGHQGLITYMRTDSTRISPVAQSAAHNYIADQFGEKYSKHGSKVKNASGAQDAHEAIRPSNVFNTPDAIAKYLDKDQLKLYTLIWNRFVASQMVAAIFDTVKVNLSQNGVIFIANGSQVKFDGYLRIYNDSDKSNMLPEMEENETVKKANVKPEQHFTQPPARYSEATLIKTLEENGVGRPSTYAPTLETIQKRYYVRLSAKRFEPTELGEIVNKLIVEFFPNIVNTEFTAEMEKDLDEVEEGKRQWIEVVDQFYKPFAKELENAEEGMEKIQIKDEPAGFDCDVCGSPMVIKLGRFGKFYACSNFPDCRNTKAIVKEIGVKCPLCHEGNIIERKTKKNRIFYGCDRYPDCEFTSWDKPIGRDCPKSGHFLVEKKVRGGGKQVVCSNDECDYQEEKQK</sequence>